<gene>
    <name evidence="1" type="primary">serC</name>
    <name type="ordered locus">Tbd_0949</name>
</gene>
<reference key="1">
    <citation type="journal article" date="2006" name="J. Bacteriol.">
        <title>The genome sequence of the obligately chemolithoautotrophic, facultatively anaerobic bacterium Thiobacillus denitrificans.</title>
        <authorList>
            <person name="Beller H.R."/>
            <person name="Chain P.S."/>
            <person name="Letain T.E."/>
            <person name="Chakicherla A."/>
            <person name="Larimer F.W."/>
            <person name="Richardson P.M."/>
            <person name="Coleman M.A."/>
            <person name="Wood A.P."/>
            <person name="Kelly D.P."/>
        </authorList>
    </citation>
    <scope>NUCLEOTIDE SEQUENCE [LARGE SCALE GENOMIC DNA]</scope>
    <source>
        <strain>ATCC 25259 / T1</strain>
    </source>
</reference>
<evidence type="ECO:0000255" key="1">
    <source>
        <dbReference type="HAMAP-Rule" id="MF_00160"/>
    </source>
</evidence>
<feature type="chain" id="PRO_1000058228" description="Phosphoserine aminotransferase">
    <location>
        <begin position="1"/>
        <end position="359"/>
    </location>
</feature>
<feature type="binding site" evidence="1">
    <location>
        <position position="41"/>
    </location>
    <ligand>
        <name>L-glutamate</name>
        <dbReference type="ChEBI" id="CHEBI:29985"/>
    </ligand>
</feature>
<feature type="binding site" evidence="1">
    <location>
        <begin position="75"/>
        <end position="76"/>
    </location>
    <ligand>
        <name>pyridoxal 5'-phosphate</name>
        <dbReference type="ChEBI" id="CHEBI:597326"/>
    </ligand>
</feature>
<feature type="binding site" evidence="1">
    <location>
        <position position="101"/>
    </location>
    <ligand>
        <name>pyridoxal 5'-phosphate</name>
        <dbReference type="ChEBI" id="CHEBI:597326"/>
    </ligand>
</feature>
<feature type="binding site" evidence="1">
    <location>
        <position position="151"/>
    </location>
    <ligand>
        <name>pyridoxal 5'-phosphate</name>
        <dbReference type="ChEBI" id="CHEBI:597326"/>
    </ligand>
</feature>
<feature type="binding site" evidence="1">
    <location>
        <position position="171"/>
    </location>
    <ligand>
        <name>pyridoxal 5'-phosphate</name>
        <dbReference type="ChEBI" id="CHEBI:597326"/>
    </ligand>
</feature>
<feature type="binding site" evidence="1">
    <location>
        <position position="194"/>
    </location>
    <ligand>
        <name>pyridoxal 5'-phosphate</name>
        <dbReference type="ChEBI" id="CHEBI:597326"/>
    </ligand>
</feature>
<feature type="binding site" evidence="1">
    <location>
        <begin position="236"/>
        <end position="237"/>
    </location>
    <ligand>
        <name>pyridoxal 5'-phosphate</name>
        <dbReference type="ChEBI" id="CHEBI:597326"/>
    </ligand>
</feature>
<feature type="modified residue" description="N6-(pyridoxal phosphate)lysine" evidence="1">
    <location>
        <position position="195"/>
    </location>
</feature>
<keyword id="KW-0028">Amino-acid biosynthesis</keyword>
<keyword id="KW-0032">Aminotransferase</keyword>
<keyword id="KW-0963">Cytoplasm</keyword>
<keyword id="KW-0663">Pyridoxal phosphate</keyword>
<keyword id="KW-0664">Pyridoxine biosynthesis</keyword>
<keyword id="KW-1185">Reference proteome</keyword>
<keyword id="KW-0718">Serine biosynthesis</keyword>
<keyword id="KW-0808">Transferase</keyword>
<name>SERC_THIDA</name>
<sequence>MTIYNFSAGPAVLPKDVLQQVQAELVDWHGSGMSVMEMSHRGKEFMGIAAEAEADLRELMAIPANYKVLFLQGGASSQFAMVPMNLLRGKASADYLNTGEWSKKAIKEAKKYAAVNVVASSEDRNFSYAPTQDRWKLDPNAAYVHYTPNETIGGVEIFWTPEAGDVPIAADMSSTILSRPIDVSKYGVIYAGAQKNIGPAGLTIVIVREDLMGETVAGTPTMFDYKIHADNESMYNTPATFAMYTAGLVFKWLKARGGLAGMEKINREKAALLYEALDATDFYASPVAKDNRSLMNVPFTLKDAALDEAFLKGAKERGLLQLKGHRSVGGMRASIYNAMPTEGVKALVDYLHAFEKNHG</sequence>
<dbReference type="EC" id="2.6.1.52" evidence="1"/>
<dbReference type="EMBL" id="CP000116">
    <property type="protein sequence ID" value="AAZ96902.1"/>
    <property type="molecule type" value="Genomic_DNA"/>
</dbReference>
<dbReference type="RefSeq" id="WP_011311461.1">
    <property type="nucleotide sequence ID" value="NC_007404.1"/>
</dbReference>
<dbReference type="SMR" id="Q3SK88"/>
<dbReference type="STRING" id="292415.Tbd_0949"/>
<dbReference type="KEGG" id="tbd:Tbd_0949"/>
<dbReference type="eggNOG" id="COG1932">
    <property type="taxonomic scope" value="Bacteria"/>
</dbReference>
<dbReference type="HOGENOM" id="CLU_034866_0_2_4"/>
<dbReference type="OrthoDB" id="9809412at2"/>
<dbReference type="UniPathway" id="UPA00135">
    <property type="reaction ID" value="UER00197"/>
</dbReference>
<dbReference type="UniPathway" id="UPA00244">
    <property type="reaction ID" value="UER00311"/>
</dbReference>
<dbReference type="Proteomes" id="UP000008291">
    <property type="component" value="Chromosome"/>
</dbReference>
<dbReference type="GO" id="GO:0005737">
    <property type="term" value="C:cytoplasm"/>
    <property type="evidence" value="ECO:0007669"/>
    <property type="project" value="UniProtKB-SubCell"/>
</dbReference>
<dbReference type="GO" id="GO:0004648">
    <property type="term" value="F:O-phospho-L-serine:2-oxoglutarate aminotransferase activity"/>
    <property type="evidence" value="ECO:0007669"/>
    <property type="project" value="UniProtKB-UniRule"/>
</dbReference>
<dbReference type="GO" id="GO:0030170">
    <property type="term" value="F:pyridoxal phosphate binding"/>
    <property type="evidence" value="ECO:0007669"/>
    <property type="project" value="UniProtKB-UniRule"/>
</dbReference>
<dbReference type="GO" id="GO:0006564">
    <property type="term" value="P:L-serine biosynthetic process"/>
    <property type="evidence" value="ECO:0007669"/>
    <property type="project" value="UniProtKB-UniRule"/>
</dbReference>
<dbReference type="GO" id="GO:0008615">
    <property type="term" value="P:pyridoxine biosynthetic process"/>
    <property type="evidence" value="ECO:0007669"/>
    <property type="project" value="UniProtKB-UniRule"/>
</dbReference>
<dbReference type="CDD" id="cd00611">
    <property type="entry name" value="PSAT_like"/>
    <property type="match status" value="1"/>
</dbReference>
<dbReference type="FunFam" id="3.40.640.10:FF:000010">
    <property type="entry name" value="Phosphoserine aminotransferase"/>
    <property type="match status" value="1"/>
</dbReference>
<dbReference type="FunFam" id="3.90.1150.10:FF:000006">
    <property type="entry name" value="Phosphoserine aminotransferase"/>
    <property type="match status" value="1"/>
</dbReference>
<dbReference type="Gene3D" id="3.90.1150.10">
    <property type="entry name" value="Aspartate Aminotransferase, domain 1"/>
    <property type="match status" value="1"/>
</dbReference>
<dbReference type="Gene3D" id="3.40.640.10">
    <property type="entry name" value="Type I PLP-dependent aspartate aminotransferase-like (Major domain)"/>
    <property type="match status" value="1"/>
</dbReference>
<dbReference type="HAMAP" id="MF_00160">
    <property type="entry name" value="SerC_aminotrans_5"/>
    <property type="match status" value="1"/>
</dbReference>
<dbReference type="InterPro" id="IPR000192">
    <property type="entry name" value="Aminotrans_V_dom"/>
</dbReference>
<dbReference type="InterPro" id="IPR020578">
    <property type="entry name" value="Aminotrans_V_PyrdxlP_BS"/>
</dbReference>
<dbReference type="InterPro" id="IPR022278">
    <property type="entry name" value="Pser_aminoTfrase"/>
</dbReference>
<dbReference type="InterPro" id="IPR015424">
    <property type="entry name" value="PyrdxlP-dep_Trfase"/>
</dbReference>
<dbReference type="InterPro" id="IPR015421">
    <property type="entry name" value="PyrdxlP-dep_Trfase_major"/>
</dbReference>
<dbReference type="InterPro" id="IPR015422">
    <property type="entry name" value="PyrdxlP-dep_Trfase_small"/>
</dbReference>
<dbReference type="NCBIfam" id="NF003764">
    <property type="entry name" value="PRK05355.1"/>
    <property type="match status" value="1"/>
</dbReference>
<dbReference type="NCBIfam" id="TIGR01364">
    <property type="entry name" value="serC_1"/>
    <property type="match status" value="1"/>
</dbReference>
<dbReference type="PANTHER" id="PTHR43247">
    <property type="entry name" value="PHOSPHOSERINE AMINOTRANSFERASE"/>
    <property type="match status" value="1"/>
</dbReference>
<dbReference type="PANTHER" id="PTHR43247:SF1">
    <property type="entry name" value="PHOSPHOSERINE AMINOTRANSFERASE"/>
    <property type="match status" value="1"/>
</dbReference>
<dbReference type="Pfam" id="PF00266">
    <property type="entry name" value="Aminotran_5"/>
    <property type="match status" value="1"/>
</dbReference>
<dbReference type="PIRSF" id="PIRSF000525">
    <property type="entry name" value="SerC"/>
    <property type="match status" value="1"/>
</dbReference>
<dbReference type="SUPFAM" id="SSF53383">
    <property type="entry name" value="PLP-dependent transferases"/>
    <property type="match status" value="1"/>
</dbReference>
<dbReference type="PROSITE" id="PS00595">
    <property type="entry name" value="AA_TRANSFER_CLASS_5"/>
    <property type="match status" value="1"/>
</dbReference>
<comment type="function">
    <text evidence="1">Catalyzes the reversible conversion of 3-phosphohydroxypyruvate to phosphoserine and of 3-hydroxy-2-oxo-4-phosphonooxybutanoate to phosphohydroxythreonine.</text>
</comment>
<comment type="catalytic activity">
    <reaction evidence="1">
        <text>O-phospho-L-serine + 2-oxoglutarate = 3-phosphooxypyruvate + L-glutamate</text>
        <dbReference type="Rhea" id="RHEA:14329"/>
        <dbReference type="ChEBI" id="CHEBI:16810"/>
        <dbReference type="ChEBI" id="CHEBI:18110"/>
        <dbReference type="ChEBI" id="CHEBI:29985"/>
        <dbReference type="ChEBI" id="CHEBI:57524"/>
        <dbReference type="EC" id="2.6.1.52"/>
    </reaction>
</comment>
<comment type="catalytic activity">
    <reaction evidence="1">
        <text>4-(phosphooxy)-L-threonine + 2-oxoglutarate = (R)-3-hydroxy-2-oxo-4-phosphooxybutanoate + L-glutamate</text>
        <dbReference type="Rhea" id="RHEA:16573"/>
        <dbReference type="ChEBI" id="CHEBI:16810"/>
        <dbReference type="ChEBI" id="CHEBI:29985"/>
        <dbReference type="ChEBI" id="CHEBI:58452"/>
        <dbReference type="ChEBI" id="CHEBI:58538"/>
        <dbReference type="EC" id="2.6.1.52"/>
    </reaction>
</comment>
<comment type="cofactor">
    <cofactor evidence="1">
        <name>pyridoxal 5'-phosphate</name>
        <dbReference type="ChEBI" id="CHEBI:597326"/>
    </cofactor>
    <text evidence="1">Binds 1 pyridoxal phosphate per subunit.</text>
</comment>
<comment type="pathway">
    <text evidence="1">Amino-acid biosynthesis; L-serine biosynthesis; L-serine from 3-phospho-D-glycerate: step 2/3.</text>
</comment>
<comment type="pathway">
    <text evidence="1">Cofactor biosynthesis; pyridoxine 5'-phosphate biosynthesis; pyridoxine 5'-phosphate from D-erythrose 4-phosphate: step 3/5.</text>
</comment>
<comment type="subunit">
    <text evidence="1">Homodimer.</text>
</comment>
<comment type="subcellular location">
    <subcellularLocation>
        <location evidence="1">Cytoplasm</location>
    </subcellularLocation>
</comment>
<comment type="similarity">
    <text evidence="1">Belongs to the class-V pyridoxal-phosphate-dependent aminotransferase family. SerC subfamily.</text>
</comment>
<accession>Q3SK88</accession>
<organism>
    <name type="scientific">Thiobacillus denitrificans (strain ATCC 25259 / T1)</name>
    <dbReference type="NCBI Taxonomy" id="292415"/>
    <lineage>
        <taxon>Bacteria</taxon>
        <taxon>Pseudomonadati</taxon>
        <taxon>Pseudomonadota</taxon>
        <taxon>Betaproteobacteria</taxon>
        <taxon>Nitrosomonadales</taxon>
        <taxon>Thiobacillaceae</taxon>
        <taxon>Thiobacillus</taxon>
    </lineage>
</organism>
<proteinExistence type="inferred from homology"/>
<protein>
    <recommendedName>
        <fullName evidence="1">Phosphoserine aminotransferase</fullName>
        <ecNumber evidence="1">2.6.1.52</ecNumber>
    </recommendedName>
    <alternativeName>
        <fullName evidence="1">Phosphohydroxythreonine aminotransferase</fullName>
        <shortName evidence="1">PSAT</shortName>
    </alternativeName>
</protein>